<evidence type="ECO:0000255" key="1"/>
<evidence type="ECO:0000255" key="2">
    <source>
        <dbReference type="PROSITE-ProRule" id="PRU00159"/>
    </source>
</evidence>
<evidence type="ECO:0000255" key="3">
    <source>
        <dbReference type="PROSITE-ProRule" id="PRU10027"/>
    </source>
</evidence>
<evidence type="ECO:0000256" key="4">
    <source>
        <dbReference type="SAM" id="MobiDB-lite"/>
    </source>
</evidence>
<evidence type="ECO:0000305" key="5"/>
<sequence>MEGSFQFNKSKQTNNNSSLDSNNIINDNINNNLNFENNNNNNNNNNNNNNNNNNNNNNNNTNNNNTTNDTSKTSANSTSTEDDEEDILGNRKKDTTGSRVLPMDTSLTGAAEPSKKRKNTQDDSEVEVQYHPQKRASFSLNISPTQLQNDLSLNIFNVSNSNNNNNSNNNNNNNNNNNNNNNKINNNSNLILNSSVDSTTSSNNNNNKNSNDNQQPQQQPEEIEGELNRERQERDKMLHEEAEIEQYKYGDGEEGENYEIMVTPHHRTSFGHITSANSDETTNNESGSPINSRKMVTDEEDPHSSHNEDHQSDQDNHGQFMNDEHQSTDDDQNKSDNEKESESARNSGDLQQKVHNSKDESTVSTPQHIFNNGNGEGEEEDDDDEEYDVPLRIQTVANNKSTKLSLSNCWLKVIPTDVWSILELRDLDLSANQLKKVSKSIGLLVHLKRLRLNHNQLTALPKELYSLPRLTTLYLNNNNFKVVPKEINRLTSLKTLDLSFNQITDISPQTNLHQMTNLVELRLRYNQLSSLPQNMLESNHLQVLWLEGNRLPLNKAILKKSPSEILSFLRGYKPPNKKVNDKVINKAHVNPALPPIDTASTIAVAQVFAQKELDTKKRKKENLDDFKKQHIETELKLKQLEEELQIANAKATKFEEEASLLQQQFNNPNTPTGPSLNLPSILLNQPHLGWDQQQQQQQQQSPNVSTPPISTSPVLTGGQQVVNGISQISLLSPTQQINNPPSPVTQFNQASPQHNNNQQQQQQQQQQQQQQQQQQQQQQQQQQQQQQQQQQQQQQQQQQQQNGSPQQPHVNNNNNNNIQQNKDHQFPVPTIPAKIIEVEKPFEWEVPLSEIAIGARIGRGGYGQVFRGSWRGTEVAVKMLFNDNVNLKLISDLRKEVDLLCKLRHPNIVLFMGACTEPSSPCIVTEYLSRGSLANILLDESIEMDWGLRLQLGFDCARGMTYLHSRNPIIIHRDLKTDNLLVDDSWQVKVADFGLATVKSHTFAKTMCGTTGWVAPEVLAEEGYTEKADVYSYAIVLWELLTRLIPYAGKNTMQVVRSIDRGERLPMPAWCPPKYAALMNRCWETDPTHRPSFPEILPIMEGMISEFQKEKKESIAQGRPIPYVGPPEKDPSNKQPPQNMATTIQQQLAQQQPQQLLEQQILLQVQQQAQLQHLQQQLEQQQKLQQQLQQQIAHPNNPNNFYFQQQLQQQQFQQQLQQHQQHFQQQQQQQQQQQQQQQQQQQQQQQQLQQTGSPIDNRLNYNFNNSNNSDIQPMQQENNYRMNINDKK</sequence>
<name>DRKD_DICDI</name>
<reference key="1">
    <citation type="journal article" date="2005" name="Nature">
        <title>The genome of the social amoeba Dictyostelium discoideum.</title>
        <authorList>
            <person name="Eichinger L."/>
            <person name="Pachebat J.A."/>
            <person name="Gloeckner G."/>
            <person name="Rajandream M.A."/>
            <person name="Sucgang R."/>
            <person name="Berriman M."/>
            <person name="Song J."/>
            <person name="Olsen R."/>
            <person name="Szafranski K."/>
            <person name="Xu Q."/>
            <person name="Tunggal B."/>
            <person name="Kummerfeld S."/>
            <person name="Madera M."/>
            <person name="Konfortov B.A."/>
            <person name="Rivero F."/>
            <person name="Bankier A.T."/>
            <person name="Lehmann R."/>
            <person name="Hamlin N."/>
            <person name="Davies R."/>
            <person name="Gaudet P."/>
            <person name="Fey P."/>
            <person name="Pilcher K."/>
            <person name="Chen G."/>
            <person name="Saunders D."/>
            <person name="Sodergren E.J."/>
            <person name="Davis P."/>
            <person name="Kerhornou A."/>
            <person name="Nie X."/>
            <person name="Hall N."/>
            <person name="Anjard C."/>
            <person name="Hemphill L."/>
            <person name="Bason N."/>
            <person name="Farbrother P."/>
            <person name="Desany B."/>
            <person name="Just E."/>
            <person name="Morio T."/>
            <person name="Rost R."/>
            <person name="Churcher C.M."/>
            <person name="Cooper J."/>
            <person name="Haydock S."/>
            <person name="van Driessche N."/>
            <person name="Cronin A."/>
            <person name="Goodhead I."/>
            <person name="Muzny D.M."/>
            <person name="Mourier T."/>
            <person name="Pain A."/>
            <person name="Lu M."/>
            <person name="Harper D."/>
            <person name="Lindsay R."/>
            <person name="Hauser H."/>
            <person name="James K.D."/>
            <person name="Quiles M."/>
            <person name="Madan Babu M."/>
            <person name="Saito T."/>
            <person name="Buchrieser C."/>
            <person name="Wardroper A."/>
            <person name="Felder M."/>
            <person name="Thangavelu M."/>
            <person name="Johnson D."/>
            <person name="Knights A."/>
            <person name="Loulseged H."/>
            <person name="Mungall K.L."/>
            <person name="Oliver K."/>
            <person name="Price C."/>
            <person name="Quail M.A."/>
            <person name="Urushihara H."/>
            <person name="Hernandez J."/>
            <person name="Rabbinowitsch E."/>
            <person name="Steffen D."/>
            <person name="Sanders M."/>
            <person name="Ma J."/>
            <person name="Kohara Y."/>
            <person name="Sharp S."/>
            <person name="Simmonds M.N."/>
            <person name="Spiegler S."/>
            <person name="Tivey A."/>
            <person name="Sugano S."/>
            <person name="White B."/>
            <person name="Walker D."/>
            <person name="Woodward J.R."/>
            <person name="Winckler T."/>
            <person name="Tanaka Y."/>
            <person name="Shaulsky G."/>
            <person name="Schleicher M."/>
            <person name="Weinstock G.M."/>
            <person name="Rosenthal A."/>
            <person name="Cox E.C."/>
            <person name="Chisholm R.L."/>
            <person name="Gibbs R.A."/>
            <person name="Loomis W.F."/>
            <person name="Platzer M."/>
            <person name="Kay R.R."/>
            <person name="Williams J.G."/>
            <person name="Dear P.H."/>
            <person name="Noegel A.A."/>
            <person name="Barrell B.G."/>
            <person name="Kuspa A."/>
        </authorList>
    </citation>
    <scope>NUCLEOTIDE SEQUENCE [LARGE SCALE GENOMIC DNA]</scope>
    <source>
        <strain>AX4</strain>
    </source>
</reference>
<reference key="2">
    <citation type="submission" date="1996-12" db="EMBL/GenBank/DDBJ databases">
        <authorList>
            <person name="Iranfar N."/>
            <person name="Loomis W.F."/>
        </authorList>
    </citation>
    <scope>NUCLEOTIDE SEQUENCE [MRNA] OF 104-618</scope>
    <source>
        <strain>AX4</strain>
    </source>
</reference>
<comment type="catalytic activity">
    <reaction>
        <text>L-seryl-[protein] + ATP = O-phospho-L-seryl-[protein] + ADP + H(+)</text>
        <dbReference type="Rhea" id="RHEA:17989"/>
        <dbReference type="Rhea" id="RHEA-COMP:9863"/>
        <dbReference type="Rhea" id="RHEA-COMP:11604"/>
        <dbReference type="ChEBI" id="CHEBI:15378"/>
        <dbReference type="ChEBI" id="CHEBI:29999"/>
        <dbReference type="ChEBI" id="CHEBI:30616"/>
        <dbReference type="ChEBI" id="CHEBI:83421"/>
        <dbReference type="ChEBI" id="CHEBI:456216"/>
        <dbReference type="EC" id="2.7.11.1"/>
    </reaction>
</comment>
<comment type="catalytic activity">
    <reaction>
        <text>L-threonyl-[protein] + ATP = O-phospho-L-threonyl-[protein] + ADP + H(+)</text>
        <dbReference type="Rhea" id="RHEA:46608"/>
        <dbReference type="Rhea" id="RHEA-COMP:11060"/>
        <dbReference type="Rhea" id="RHEA-COMP:11605"/>
        <dbReference type="ChEBI" id="CHEBI:15378"/>
        <dbReference type="ChEBI" id="CHEBI:30013"/>
        <dbReference type="ChEBI" id="CHEBI:30616"/>
        <dbReference type="ChEBI" id="CHEBI:61977"/>
        <dbReference type="ChEBI" id="CHEBI:456216"/>
        <dbReference type="EC" id="2.7.11.1"/>
    </reaction>
</comment>
<comment type="similarity">
    <text evidence="5">Belongs to the protein kinase superfamily. TKL Ser/Thr protein kinase family.</text>
</comment>
<feature type="chain" id="PRO_0000354060" description="Probable serine/threonine-protein kinase drkD">
    <location>
        <begin position="1"/>
        <end position="1288"/>
    </location>
</feature>
<feature type="repeat" description="LRR 1">
    <location>
        <begin position="400"/>
        <end position="421"/>
    </location>
</feature>
<feature type="repeat" description="LRR 2">
    <location>
        <begin position="423"/>
        <end position="444"/>
    </location>
</feature>
<feature type="repeat" description="LRR 3">
    <location>
        <begin position="446"/>
        <end position="468"/>
    </location>
</feature>
<feature type="repeat" description="LRR 4">
    <location>
        <begin position="469"/>
        <end position="490"/>
    </location>
</feature>
<feature type="repeat" description="LRR 5">
    <location>
        <begin position="492"/>
        <end position="513"/>
    </location>
</feature>
<feature type="repeat" description="LRR 6">
    <location>
        <begin position="517"/>
        <end position="538"/>
    </location>
</feature>
<feature type="repeat" description="LRR 7">
    <location>
        <begin position="540"/>
        <end position="561"/>
    </location>
</feature>
<feature type="domain" description="Protein kinase" evidence="2">
    <location>
        <begin position="851"/>
        <end position="1104"/>
    </location>
</feature>
<feature type="region of interest" description="Disordered" evidence="4">
    <location>
        <begin position="1"/>
        <end position="132"/>
    </location>
</feature>
<feature type="region of interest" description="Disordered" evidence="4">
    <location>
        <begin position="156"/>
        <end position="223"/>
    </location>
</feature>
<feature type="region of interest" description="Disordered" evidence="4">
    <location>
        <begin position="269"/>
        <end position="386"/>
    </location>
</feature>
<feature type="region of interest" description="Disordered" evidence="4">
    <location>
        <begin position="690"/>
        <end position="717"/>
    </location>
</feature>
<feature type="region of interest" description="Disordered" evidence="4">
    <location>
        <begin position="733"/>
        <end position="764"/>
    </location>
</feature>
<feature type="region of interest" description="Disordered" evidence="4">
    <location>
        <begin position="796"/>
        <end position="825"/>
    </location>
</feature>
<feature type="region of interest" description="Disordered" evidence="4">
    <location>
        <begin position="1118"/>
        <end position="1141"/>
    </location>
</feature>
<feature type="region of interest" description="Disordered" evidence="4">
    <location>
        <begin position="1245"/>
        <end position="1288"/>
    </location>
</feature>
<feature type="coiled-coil region" evidence="1">
    <location>
        <begin position="221"/>
        <end position="248"/>
    </location>
</feature>
<feature type="compositionally biased region" description="Polar residues" evidence="4">
    <location>
        <begin position="1"/>
        <end position="12"/>
    </location>
</feature>
<feature type="compositionally biased region" description="Low complexity" evidence="4">
    <location>
        <begin position="13"/>
        <end position="79"/>
    </location>
</feature>
<feature type="compositionally biased region" description="Low complexity" evidence="4">
    <location>
        <begin position="156"/>
        <end position="220"/>
    </location>
</feature>
<feature type="compositionally biased region" description="Polar residues" evidence="4">
    <location>
        <begin position="271"/>
        <end position="291"/>
    </location>
</feature>
<feature type="compositionally biased region" description="Basic and acidic residues" evidence="4">
    <location>
        <begin position="302"/>
        <end position="343"/>
    </location>
</feature>
<feature type="compositionally biased region" description="Polar residues" evidence="4">
    <location>
        <begin position="344"/>
        <end position="354"/>
    </location>
</feature>
<feature type="compositionally biased region" description="Acidic residues" evidence="4">
    <location>
        <begin position="376"/>
        <end position="386"/>
    </location>
</feature>
<feature type="compositionally biased region" description="Polar residues" evidence="4">
    <location>
        <begin position="701"/>
        <end position="717"/>
    </location>
</feature>
<feature type="compositionally biased region" description="Polar residues" evidence="4">
    <location>
        <begin position="733"/>
        <end position="757"/>
    </location>
</feature>
<feature type="compositionally biased region" description="Low complexity" evidence="4">
    <location>
        <begin position="1257"/>
        <end position="1268"/>
    </location>
</feature>
<feature type="compositionally biased region" description="Polar residues" evidence="4">
    <location>
        <begin position="1269"/>
        <end position="1282"/>
    </location>
</feature>
<feature type="active site" description="Proton acceptor" evidence="2 3">
    <location>
        <position position="974"/>
    </location>
</feature>
<feature type="binding site" evidence="2">
    <location>
        <begin position="857"/>
        <end position="865"/>
    </location>
    <ligand>
        <name>ATP</name>
        <dbReference type="ChEBI" id="CHEBI:30616"/>
    </ligand>
</feature>
<feature type="binding site" evidence="2">
    <location>
        <position position="878"/>
    </location>
    <ligand>
        <name>ATP</name>
        <dbReference type="ChEBI" id="CHEBI:30616"/>
    </ligand>
</feature>
<feature type="sequence conflict" description="In Ref. 2; AAB69632." evidence="5" ref="2">
    <original>Q</original>
    <variation>L</variation>
    <location>
        <position position="232"/>
    </location>
</feature>
<feature type="sequence conflict" description="In Ref. 2; AAB69632." evidence="5" ref="2">
    <original>L</original>
    <variation>F</variation>
    <location>
        <position position="350"/>
    </location>
</feature>
<feature type="sequence conflict" description="In Ref. 2; AAB69632." evidence="5" ref="2">
    <original>L</original>
    <variation>F</variation>
    <location>
        <position position="406"/>
    </location>
</feature>
<feature type="sequence conflict" description="In Ref. 2; AAB69632." evidence="5" ref="2">
    <original>K</original>
    <variation>Q</variation>
    <location>
        <position position="494"/>
    </location>
</feature>
<feature type="sequence conflict" description="In Ref. 2; AAB69632." evidence="5" ref="2">
    <original>L</original>
    <variation>F</variation>
    <location>
        <position position="521"/>
    </location>
</feature>
<feature type="sequence conflict" description="In Ref. 2; AAB69632." evidence="5" ref="2">
    <original>KR</original>
    <variation>NT</variation>
    <location>
        <begin position="617"/>
        <end position="618"/>
    </location>
</feature>
<proteinExistence type="evidence at transcript level"/>
<dbReference type="EC" id="2.7.11.1"/>
<dbReference type="EMBL" id="AAFI02000042">
    <property type="protein sequence ID" value="EAL66540.1"/>
    <property type="molecule type" value="Genomic_DNA"/>
</dbReference>
<dbReference type="EMBL" id="U82512">
    <property type="protein sequence ID" value="AAB69632.1"/>
    <property type="molecule type" value="mRNA"/>
</dbReference>
<dbReference type="RefSeq" id="XP_640564.1">
    <property type="nucleotide sequence ID" value="XM_635472.1"/>
</dbReference>
<dbReference type="SMR" id="Q54TM7"/>
<dbReference type="FunCoup" id="Q54TM7">
    <property type="interactions" value="654"/>
</dbReference>
<dbReference type="STRING" id="44689.Q54TM7"/>
<dbReference type="PaxDb" id="44689-DDB0214883"/>
<dbReference type="ABCD" id="Q54TM7">
    <property type="antibodies" value="2 sequenced antibodies"/>
</dbReference>
<dbReference type="EnsemblProtists" id="EAL66540">
    <property type="protein sequence ID" value="EAL66540"/>
    <property type="gene ID" value="DDB_G0281557"/>
</dbReference>
<dbReference type="GeneID" id="8623174"/>
<dbReference type="KEGG" id="ddi:DDB_G0281557"/>
<dbReference type="dictyBase" id="DDB_G0281557">
    <property type="gene designation" value="drkD"/>
</dbReference>
<dbReference type="VEuPathDB" id="AmoebaDB:DDB_G0281557"/>
<dbReference type="eggNOG" id="KOG0192">
    <property type="taxonomic scope" value="Eukaryota"/>
</dbReference>
<dbReference type="HOGENOM" id="CLU_262498_0_0_1"/>
<dbReference type="InParanoid" id="Q54TM7"/>
<dbReference type="OMA" id="PCIVTEY"/>
<dbReference type="PhylomeDB" id="Q54TM7"/>
<dbReference type="PRO" id="PR:Q54TM7"/>
<dbReference type="Proteomes" id="UP000002195">
    <property type="component" value="Chromosome 3"/>
</dbReference>
<dbReference type="GO" id="GO:0005737">
    <property type="term" value="C:cytoplasm"/>
    <property type="evidence" value="ECO:0000318"/>
    <property type="project" value="GO_Central"/>
</dbReference>
<dbReference type="GO" id="GO:0005829">
    <property type="term" value="C:cytosol"/>
    <property type="evidence" value="ECO:0000314"/>
    <property type="project" value="dictyBase"/>
</dbReference>
<dbReference type="GO" id="GO:0005634">
    <property type="term" value="C:nucleus"/>
    <property type="evidence" value="ECO:0000314"/>
    <property type="project" value="dictyBase"/>
</dbReference>
<dbReference type="GO" id="GO:0005524">
    <property type="term" value="F:ATP binding"/>
    <property type="evidence" value="ECO:0007669"/>
    <property type="project" value="UniProtKB-KW"/>
</dbReference>
<dbReference type="GO" id="GO:0106310">
    <property type="term" value="F:protein serine kinase activity"/>
    <property type="evidence" value="ECO:0007669"/>
    <property type="project" value="RHEA"/>
</dbReference>
<dbReference type="GO" id="GO:0004674">
    <property type="term" value="F:protein serine/threonine kinase activity"/>
    <property type="evidence" value="ECO:0000318"/>
    <property type="project" value="GO_Central"/>
</dbReference>
<dbReference type="GO" id="GO:0050829">
    <property type="term" value="P:defense response to Gram-negative bacterium"/>
    <property type="evidence" value="ECO:0000315"/>
    <property type="project" value="dictyBase"/>
</dbReference>
<dbReference type="GO" id="GO:2000146">
    <property type="term" value="P:negative regulation of cell motility"/>
    <property type="evidence" value="ECO:0000315"/>
    <property type="project" value="dictyBase"/>
</dbReference>
<dbReference type="GO" id="GO:0050765">
    <property type="term" value="P:negative regulation of phagocytosis"/>
    <property type="evidence" value="ECO:0000315"/>
    <property type="project" value="dictyBase"/>
</dbReference>
<dbReference type="GO" id="GO:0036211">
    <property type="term" value="P:protein modification process"/>
    <property type="evidence" value="ECO:0000315"/>
    <property type="project" value="dictyBase"/>
</dbReference>
<dbReference type="GO" id="GO:0051593">
    <property type="term" value="P:response to folic acid"/>
    <property type="evidence" value="ECO:0000315"/>
    <property type="project" value="dictyBase"/>
</dbReference>
<dbReference type="GO" id="GO:0007165">
    <property type="term" value="P:signal transduction"/>
    <property type="evidence" value="ECO:0000318"/>
    <property type="project" value="GO_Central"/>
</dbReference>
<dbReference type="CDD" id="cd13999">
    <property type="entry name" value="STKc_MAP3K-like"/>
    <property type="match status" value="1"/>
</dbReference>
<dbReference type="FunFam" id="3.30.200.20:FF:000060">
    <property type="entry name" value="Serine/threonine-protein kinase isoform 1"/>
    <property type="match status" value="1"/>
</dbReference>
<dbReference type="Gene3D" id="3.30.200.20">
    <property type="entry name" value="Phosphorylase Kinase, domain 1"/>
    <property type="match status" value="1"/>
</dbReference>
<dbReference type="Gene3D" id="3.80.10.10">
    <property type="entry name" value="Ribonuclease Inhibitor"/>
    <property type="match status" value="1"/>
</dbReference>
<dbReference type="Gene3D" id="1.10.510.10">
    <property type="entry name" value="Transferase(Phosphotransferase) domain 1"/>
    <property type="match status" value="1"/>
</dbReference>
<dbReference type="InterPro" id="IPR011009">
    <property type="entry name" value="Kinase-like_dom_sf"/>
</dbReference>
<dbReference type="InterPro" id="IPR001611">
    <property type="entry name" value="Leu-rich_rpt"/>
</dbReference>
<dbReference type="InterPro" id="IPR003591">
    <property type="entry name" value="Leu-rich_rpt_typical-subtyp"/>
</dbReference>
<dbReference type="InterPro" id="IPR032675">
    <property type="entry name" value="LRR_dom_sf"/>
</dbReference>
<dbReference type="InterPro" id="IPR055414">
    <property type="entry name" value="LRR_R13L4/SHOC2-like"/>
</dbReference>
<dbReference type="InterPro" id="IPR000719">
    <property type="entry name" value="Prot_kinase_dom"/>
</dbReference>
<dbReference type="InterPro" id="IPR017441">
    <property type="entry name" value="Protein_kinase_ATP_BS"/>
</dbReference>
<dbReference type="InterPro" id="IPR001245">
    <property type="entry name" value="Ser-Thr/Tyr_kinase_cat_dom"/>
</dbReference>
<dbReference type="InterPro" id="IPR008271">
    <property type="entry name" value="Ser/Thr_kinase_AS"/>
</dbReference>
<dbReference type="InterPro" id="IPR051681">
    <property type="entry name" value="Ser/Thr_Kinases-Pseudokinases"/>
</dbReference>
<dbReference type="PANTHER" id="PTHR44329:SF288">
    <property type="entry name" value="MITOGEN-ACTIVATED PROTEIN KINASE KINASE KINASE 20"/>
    <property type="match status" value="1"/>
</dbReference>
<dbReference type="PANTHER" id="PTHR44329">
    <property type="entry name" value="SERINE/THREONINE-PROTEIN KINASE TNNI3K-RELATED"/>
    <property type="match status" value="1"/>
</dbReference>
<dbReference type="Pfam" id="PF23598">
    <property type="entry name" value="LRR_14"/>
    <property type="match status" value="1"/>
</dbReference>
<dbReference type="Pfam" id="PF07714">
    <property type="entry name" value="PK_Tyr_Ser-Thr"/>
    <property type="match status" value="1"/>
</dbReference>
<dbReference type="PRINTS" id="PR00109">
    <property type="entry name" value="TYRKINASE"/>
</dbReference>
<dbReference type="SMART" id="SM00369">
    <property type="entry name" value="LRR_TYP"/>
    <property type="match status" value="5"/>
</dbReference>
<dbReference type="SMART" id="SM00220">
    <property type="entry name" value="S_TKc"/>
    <property type="match status" value="1"/>
</dbReference>
<dbReference type="SUPFAM" id="SSF52058">
    <property type="entry name" value="L domain-like"/>
    <property type="match status" value="1"/>
</dbReference>
<dbReference type="SUPFAM" id="SSF56112">
    <property type="entry name" value="Protein kinase-like (PK-like)"/>
    <property type="match status" value="1"/>
</dbReference>
<dbReference type="PROSITE" id="PS51450">
    <property type="entry name" value="LRR"/>
    <property type="match status" value="6"/>
</dbReference>
<dbReference type="PROSITE" id="PS00107">
    <property type="entry name" value="PROTEIN_KINASE_ATP"/>
    <property type="match status" value="1"/>
</dbReference>
<dbReference type="PROSITE" id="PS50011">
    <property type="entry name" value="PROTEIN_KINASE_DOM"/>
    <property type="match status" value="1"/>
</dbReference>
<dbReference type="PROSITE" id="PS00108">
    <property type="entry name" value="PROTEIN_KINASE_ST"/>
    <property type="match status" value="1"/>
</dbReference>
<keyword id="KW-0067">ATP-binding</keyword>
<keyword id="KW-0175">Coiled coil</keyword>
<keyword id="KW-0418">Kinase</keyword>
<keyword id="KW-0433">Leucine-rich repeat</keyword>
<keyword id="KW-0547">Nucleotide-binding</keyword>
<keyword id="KW-1185">Reference proteome</keyword>
<keyword id="KW-0677">Repeat</keyword>
<keyword id="KW-0723">Serine/threonine-protein kinase</keyword>
<keyword id="KW-0808">Transferase</keyword>
<organism>
    <name type="scientific">Dictyostelium discoideum</name>
    <name type="common">Social amoeba</name>
    <dbReference type="NCBI Taxonomy" id="44689"/>
    <lineage>
        <taxon>Eukaryota</taxon>
        <taxon>Amoebozoa</taxon>
        <taxon>Evosea</taxon>
        <taxon>Eumycetozoa</taxon>
        <taxon>Dictyostelia</taxon>
        <taxon>Dictyosteliales</taxon>
        <taxon>Dictyosteliaceae</taxon>
        <taxon>Dictyostelium</taxon>
    </lineage>
</organism>
<accession>Q54TM7</accession>
<accession>O15912</accession>
<protein>
    <recommendedName>
        <fullName>Probable serine/threonine-protein kinase drkD</fullName>
        <ecNumber>2.7.11.1</ecNumber>
    </recommendedName>
    <alternativeName>
        <fullName>Receptor-like kinase D</fullName>
    </alternativeName>
</protein>
<gene>
    <name type="primary">drkD</name>
    <name type="synonym">rsc21</name>
    <name type="ORF">DDB_G0281557</name>
</gene>